<protein>
    <recommendedName>
        <fullName evidence="1">Leucyl/phenylalanyl-tRNA--protein transferase</fullName>
        <ecNumber evidence="1">2.3.2.6</ecNumber>
    </recommendedName>
    <alternativeName>
        <fullName evidence="1">L/F-transferase</fullName>
    </alternativeName>
    <alternativeName>
        <fullName evidence="1">Leucyltransferase</fullName>
    </alternativeName>
    <alternativeName>
        <fullName evidence="1">Phenyalanyltransferase</fullName>
    </alternativeName>
</protein>
<gene>
    <name evidence="1" type="primary">aat</name>
    <name type="ordered locus">Mpe_A1469</name>
</gene>
<sequence>MPTWLASPDDPLPDTRHALPAGSEVPGLVAAGTDLSPRRLAEAYARGIFPWYSAGQPVLWWSPDPRMVLPVAEFKLSHSLRKTLRRFSAAPHCEVRIDHDFAAVIHACATTPREGQDGTWIQPELQAAYTEWHRLGAVHSFETWVDGRLLGGLYGVNLGRMFFGESMFSHATDASKIALAALVAFCRANDIALIDCQQRTAHLGSLGAREIDRPAFEGHLARTVAQRPPEDWTYHRSHWTQLRLDTGPDPASSSVTEISLRPAAP</sequence>
<accession>A2SFU2</accession>
<proteinExistence type="inferred from homology"/>
<name>LFTR_METPP</name>
<dbReference type="EC" id="2.3.2.6" evidence="1"/>
<dbReference type="EMBL" id="CP000555">
    <property type="protein sequence ID" value="ABM94431.1"/>
    <property type="molecule type" value="Genomic_DNA"/>
</dbReference>
<dbReference type="RefSeq" id="WP_011829068.1">
    <property type="nucleotide sequence ID" value="NC_008825.1"/>
</dbReference>
<dbReference type="SMR" id="A2SFU2"/>
<dbReference type="STRING" id="420662.Mpe_A1469"/>
<dbReference type="KEGG" id="mpt:Mpe_A1469"/>
<dbReference type="eggNOG" id="COG2360">
    <property type="taxonomic scope" value="Bacteria"/>
</dbReference>
<dbReference type="HOGENOM" id="CLU_075045_0_0_4"/>
<dbReference type="Proteomes" id="UP000000366">
    <property type="component" value="Chromosome"/>
</dbReference>
<dbReference type="GO" id="GO:0005737">
    <property type="term" value="C:cytoplasm"/>
    <property type="evidence" value="ECO:0007669"/>
    <property type="project" value="UniProtKB-SubCell"/>
</dbReference>
<dbReference type="GO" id="GO:0008914">
    <property type="term" value="F:leucyl-tRNA--protein transferase activity"/>
    <property type="evidence" value="ECO:0007669"/>
    <property type="project" value="UniProtKB-UniRule"/>
</dbReference>
<dbReference type="GO" id="GO:0030163">
    <property type="term" value="P:protein catabolic process"/>
    <property type="evidence" value="ECO:0007669"/>
    <property type="project" value="UniProtKB-UniRule"/>
</dbReference>
<dbReference type="Gene3D" id="3.40.630.70">
    <property type="entry name" value="Leucyl/phenylalanyl-tRNA-protein transferase, C-terminal domain"/>
    <property type="match status" value="1"/>
</dbReference>
<dbReference type="Gene3D" id="3.30.70.3550">
    <property type="entry name" value="Leucyl/phenylalanyl-tRNA-protein transferase, N-terminal domain"/>
    <property type="match status" value="1"/>
</dbReference>
<dbReference type="HAMAP" id="MF_00688">
    <property type="entry name" value="Leu_Phe_trans"/>
    <property type="match status" value="1"/>
</dbReference>
<dbReference type="InterPro" id="IPR016181">
    <property type="entry name" value="Acyl_CoA_acyltransferase"/>
</dbReference>
<dbReference type="InterPro" id="IPR004616">
    <property type="entry name" value="Leu/Phe-tRNA_Trfase"/>
</dbReference>
<dbReference type="InterPro" id="IPR042203">
    <property type="entry name" value="Leu/Phe-tRNA_Trfase_C"/>
</dbReference>
<dbReference type="InterPro" id="IPR042221">
    <property type="entry name" value="Leu/Phe-tRNA_Trfase_N"/>
</dbReference>
<dbReference type="NCBIfam" id="TIGR00667">
    <property type="entry name" value="aat"/>
    <property type="match status" value="1"/>
</dbReference>
<dbReference type="PANTHER" id="PTHR30098">
    <property type="entry name" value="LEUCYL/PHENYLALANYL-TRNA--PROTEIN TRANSFERASE"/>
    <property type="match status" value="1"/>
</dbReference>
<dbReference type="PANTHER" id="PTHR30098:SF2">
    <property type="entry name" value="LEUCYL_PHENYLALANYL-TRNA--PROTEIN TRANSFERASE"/>
    <property type="match status" value="1"/>
</dbReference>
<dbReference type="Pfam" id="PF03588">
    <property type="entry name" value="Leu_Phe_trans"/>
    <property type="match status" value="1"/>
</dbReference>
<dbReference type="SUPFAM" id="SSF55729">
    <property type="entry name" value="Acyl-CoA N-acyltransferases (Nat)"/>
    <property type="match status" value="1"/>
</dbReference>
<reference key="1">
    <citation type="journal article" date="2007" name="J. Bacteriol.">
        <title>Whole-genome analysis of the methyl tert-butyl ether-degrading beta-proteobacterium Methylibium petroleiphilum PM1.</title>
        <authorList>
            <person name="Kane S.R."/>
            <person name="Chakicherla A.Y."/>
            <person name="Chain P.S.G."/>
            <person name="Schmidt R."/>
            <person name="Shin M.W."/>
            <person name="Legler T.C."/>
            <person name="Scow K.M."/>
            <person name="Larimer F.W."/>
            <person name="Lucas S.M."/>
            <person name="Richardson P.M."/>
            <person name="Hristova K.R."/>
        </authorList>
    </citation>
    <scope>NUCLEOTIDE SEQUENCE [LARGE SCALE GENOMIC DNA]</scope>
    <source>
        <strain>ATCC BAA-1232 / LMG 22953 / PM1</strain>
    </source>
</reference>
<keyword id="KW-0012">Acyltransferase</keyword>
<keyword id="KW-0963">Cytoplasm</keyword>
<keyword id="KW-1185">Reference proteome</keyword>
<keyword id="KW-0808">Transferase</keyword>
<comment type="function">
    <text evidence="1">Functions in the N-end rule pathway of protein degradation where it conjugates Leu, Phe and, less efficiently, Met from aminoacyl-tRNAs to the N-termini of proteins containing an N-terminal arginine or lysine.</text>
</comment>
<comment type="catalytic activity">
    <reaction evidence="1">
        <text>N-terminal L-lysyl-[protein] + L-leucyl-tRNA(Leu) = N-terminal L-leucyl-L-lysyl-[protein] + tRNA(Leu) + H(+)</text>
        <dbReference type="Rhea" id="RHEA:12340"/>
        <dbReference type="Rhea" id="RHEA-COMP:9613"/>
        <dbReference type="Rhea" id="RHEA-COMP:9622"/>
        <dbReference type="Rhea" id="RHEA-COMP:12670"/>
        <dbReference type="Rhea" id="RHEA-COMP:12671"/>
        <dbReference type="ChEBI" id="CHEBI:15378"/>
        <dbReference type="ChEBI" id="CHEBI:65249"/>
        <dbReference type="ChEBI" id="CHEBI:78442"/>
        <dbReference type="ChEBI" id="CHEBI:78494"/>
        <dbReference type="ChEBI" id="CHEBI:133043"/>
        <dbReference type="EC" id="2.3.2.6"/>
    </reaction>
</comment>
<comment type="catalytic activity">
    <reaction evidence="1">
        <text>N-terminal L-arginyl-[protein] + L-leucyl-tRNA(Leu) = N-terminal L-leucyl-L-arginyl-[protein] + tRNA(Leu) + H(+)</text>
        <dbReference type="Rhea" id="RHEA:50416"/>
        <dbReference type="Rhea" id="RHEA-COMP:9613"/>
        <dbReference type="Rhea" id="RHEA-COMP:9622"/>
        <dbReference type="Rhea" id="RHEA-COMP:12672"/>
        <dbReference type="Rhea" id="RHEA-COMP:12673"/>
        <dbReference type="ChEBI" id="CHEBI:15378"/>
        <dbReference type="ChEBI" id="CHEBI:64719"/>
        <dbReference type="ChEBI" id="CHEBI:78442"/>
        <dbReference type="ChEBI" id="CHEBI:78494"/>
        <dbReference type="ChEBI" id="CHEBI:133044"/>
        <dbReference type="EC" id="2.3.2.6"/>
    </reaction>
</comment>
<comment type="catalytic activity">
    <reaction evidence="1">
        <text>L-phenylalanyl-tRNA(Phe) + an N-terminal L-alpha-aminoacyl-[protein] = an N-terminal L-phenylalanyl-L-alpha-aminoacyl-[protein] + tRNA(Phe)</text>
        <dbReference type="Rhea" id="RHEA:43632"/>
        <dbReference type="Rhea" id="RHEA-COMP:9668"/>
        <dbReference type="Rhea" id="RHEA-COMP:9699"/>
        <dbReference type="Rhea" id="RHEA-COMP:10636"/>
        <dbReference type="Rhea" id="RHEA-COMP:10637"/>
        <dbReference type="ChEBI" id="CHEBI:78442"/>
        <dbReference type="ChEBI" id="CHEBI:78531"/>
        <dbReference type="ChEBI" id="CHEBI:78597"/>
        <dbReference type="ChEBI" id="CHEBI:83561"/>
        <dbReference type="EC" id="2.3.2.6"/>
    </reaction>
</comment>
<comment type="subcellular location">
    <subcellularLocation>
        <location evidence="1">Cytoplasm</location>
    </subcellularLocation>
</comment>
<comment type="similarity">
    <text evidence="1">Belongs to the L/F-transferase family.</text>
</comment>
<evidence type="ECO:0000255" key="1">
    <source>
        <dbReference type="HAMAP-Rule" id="MF_00688"/>
    </source>
</evidence>
<evidence type="ECO:0000256" key="2">
    <source>
        <dbReference type="SAM" id="MobiDB-lite"/>
    </source>
</evidence>
<organism>
    <name type="scientific">Methylibium petroleiphilum (strain ATCC BAA-1232 / LMG 22953 / PM1)</name>
    <dbReference type="NCBI Taxonomy" id="420662"/>
    <lineage>
        <taxon>Bacteria</taxon>
        <taxon>Pseudomonadati</taxon>
        <taxon>Pseudomonadota</taxon>
        <taxon>Betaproteobacteria</taxon>
        <taxon>Burkholderiales</taxon>
        <taxon>Sphaerotilaceae</taxon>
        <taxon>Methylibium</taxon>
    </lineage>
</organism>
<feature type="chain" id="PRO_0000304343" description="Leucyl/phenylalanyl-tRNA--protein transferase">
    <location>
        <begin position="1"/>
        <end position="265"/>
    </location>
</feature>
<feature type="region of interest" description="Disordered" evidence="2">
    <location>
        <begin position="244"/>
        <end position="265"/>
    </location>
</feature>